<accession>Q5F783</accession>
<comment type="function">
    <text evidence="1">Methylates large ribosomal subunit protein uL3 on a specific glutamine residue.</text>
</comment>
<comment type="catalytic activity">
    <reaction evidence="1">
        <text>L-glutaminyl-[ribosomal protein uL3] + S-adenosyl-L-methionine = N(5)-methyl-L-glutaminyl-[ribosomal protein uL3] + S-adenosyl-L-homocysteine + H(+)</text>
        <dbReference type="Rhea" id="RHEA:45020"/>
        <dbReference type="Rhea" id="RHEA-COMP:11063"/>
        <dbReference type="Rhea" id="RHEA-COMP:11064"/>
        <dbReference type="ChEBI" id="CHEBI:15378"/>
        <dbReference type="ChEBI" id="CHEBI:30011"/>
        <dbReference type="ChEBI" id="CHEBI:57856"/>
        <dbReference type="ChEBI" id="CHEBI:59789"/>
        <dbReference type="ChEBI" id="CHEBI:61891"/>
        <dbReference type="EC" id="2.1.1.298"/>
    </reaction>
</comment>
<comment type="similarity">
    <text evidence="1">Belongs to the protein N5-glutamine methyltransferase family. PrmB subfamily.</text>
</comment>
<dbReference type="EC" id="2.1.1.298" evidence="1"/>
<dbReference type="EMBL" id="AE004969">
    <property type="protein sequence ID" value="AAW89954.2"/>
    <property type="molecule type" value="Genomic_DNA"/>
</dbReference>
<dbReference type="RefSeq" id="WP_014580280.1">
    <property type="nucleotide sequence ID" value="NC_002946.2"/>
</dbReference>
<dbReference type="SMR" id="Q5F783"/>
<dbReference type="STRING" id="242231.NGO_1300"/>
<dbReference type="GeneID" id="66753498"/>
<dbReference type="KEGG" id="ngo:NGO_1300"/>
<dbReference type="PATRIC" id="fig|242231.10.peg.1528"/>
<dbReference type="HOGENOM" id="CLU_018398_5_1_4"/>
<dbReference type="Proteomes" id="UP000000535">
    <property type="component" value="Chromosome"/>
</dbReference>
<dbReference type="GO" id="GO:0005829">
    <property type="term" value="C:cytosol"/>
    <property type="evidence" value="ECO:0007669"/>
    <property type="project" value="TreeGrafter"/>
</dbReference>
<dbReference type="GO" id="GO:0003676">
    <property type="term" value="F:nucleic acid binding"/>
    <property type="evidence" value="ECO:0007669"/>
    <property type="project" value="InterPro"/>
</dbReference>
<dbReference type="GO" id="GO:0036009">
    <property type="term" value="F:protein-glutamine N-methyltransferase activity"/>
    <property type="evidence" value="ECO:0007669"/>
    <property type="project" value="UniProtKB-UniRule"/>
</dbReference>
<dbReference type="GO" id="GO:0032259">
    <property type="term" value="P:methylation"/>
    <property type="evidence" value="ECO:0007669"/>
    <property type="project" value="UniProtKB-KW"/>
</dbReference>
<dbReference type="CDD" id="cd02440">
    <property type="entry name" value="AdoMet_MTases"/>
    <property type="match status" value="1"/>
</dbReference>
<dbReference type="FunFam" id="3.40.50.150:FF:000042">
    <property type="entry name" value="50S ribosomal protein L3 glutamine methyltransferase"/>
    <property type="match status" value="1"/>
</dbReference>
<dbReference type="Gene3D" id="1.10.8.10">
    <property type="entry name" value="DNA helicase RuvA subunit, C-terminal domain"/>
    <property type="match status" value="1"/>
</dbReference>
<dbReference type="Gene3D" id="3.40.50.150">
    <property type="entry name" value="Vaccinia Virus protein VP39"/>
    <property type="match status" value="1"/>
</dbReference>
<dbReference type="HAMAP" id="MF_02125">
    <property type="entry name" value="L3_methyltr_PrmB"/>
    <property type="match status" value="1"/>
</dbReference>
<dbReference type="InterPro" id="IPR002052">
    <property type="entry name" value="DNA_methylase_N6_adenine_CS"/>
</dbReference>
<dbReference type="InterPro" id="IPR004556">
    <property type="entry name" value="HemK-like"/>
</dbReference>
<dbReference type="InterPro" id="IPR017127">
    <property type="entry name" value="Ribosome_uL3_MTase"/>
</dbReference>
<dbReference type="InterPro" id="IPR029063">
    <property type="entry name" value="SAM-dependent_MTases_sf"/>
</dbReference>
<dbReference type="InterPro" id="IPR007848">
    <property type="entry name" value="Small_mtfrase_dom"/>
</dbReference>
<dbReference type="NCBIfam" id="TIGR00536">
    <property type="entry name" value="hemK_fam"/>
    <property type="match status" value="1"/>
</dbReference>
<dbReference type="NCBIfam" id="TIGR03533">
    <property type="entry name" value="L3_gln_methyl"/>
    <property type="match status" value="1"/>
</dbReference>
<dbReference type="PANTHER" id="PTHR47806">
    <property type="entry name" value="50S RIBOSOMAL PROTEIN L3 GLUTAMINE METHYLTRANSFERASE"/>
    <property type="match status" value="1"/>
</dbReference>
<dbReference type="PANTHER" id="PTHR47806:SF1">
    <property type="entry name" value="RIBOSOMAL PROTEIN UL3 GLUTAMINE METHYLTRANSFERASE"/>
    <property type="match status" value="1"/>
</dbReference>
<dbReference type="Pfam" id="PF05175">
    <property type="entry name" value="MTS"/>
    <property type="match status" value="1"/>
</dbReference>
<dbReference type="PIRSF" id="PIRSF037167">
    <property type="entry name" value="Mtase_YfcB_prd"/>
    <property type="match status" value="1"/>
</dbReference>
<dbReference type="SUPFAM" id="SSF53335">
    <property type="entry name" value="S-adenosyl-L-methionine-dependent methyltransferases"/>
    <property type="match status" value="1"/>
</dbReference>
<gene>
    <name evidence="1" type="primary">prmB</name>
    <name type="ordered locus">NGO_1300</name>
</gene>
<reference key="1">
    <citation type="submission" date="2003-03" db="EMBL/GenBank/DDBJ databases">
        <title>The complete genome sequence of Neisseria gonorrhoeae.</title>
        <authorList>
            <person name="Lewis L.A."/>
            <person name="Gillaspy A.F."/>
            <person name="McLaughlin R.E."/>
            <person name="Gipson M."/>
            <person name="Ducey T.F."/>
            <person name="Ownbey T."/>
            <person name="Hartman K."/>
            <person name="Nydick C."/>
            <person name="Carson M.B."/>
            <person name="Vaughn J."/>
            <person name="Thomson C."/>
            <person name="Song L."/>
            <person name="Lin S."/>
            <person name="Yuan X."/>
            <person name="Najar F."/>
            <person name="Zhan M."/>
            <person name="Ren Q."/>
            <person name="Zhu H."/>
            <person name="Qi S."/>
            <person name="Kenton S.M."/>
            <person name="Lai H."/>
            <person name="White J.D."/>
            <person name="Clifton S."/>
            <person name="Roe B.A."/>
            <person name="Dyer D.W."/>
        </authorList>
    </citation>
    <scope>NUCLEOTIDE SEQUENCE [LARGE SCALE GENOMIC DNA]</scope>
    <source>
        <strain>ATCC 700825 / FA 1090</strain>
    </source>
</reference>
<proteinExistence type="inferred from homology"/>
<organism>
    <name type="scientific">Neisseria gonorrhoeae (strain ATCC 700825 / FA 1090)</name>
    <dbReference type="NCBI Taxonomy" id="242231"/>
    <lineage>
        <taxon>Bacteria</taxon>
        <taxon>Pseudomonadati</taxon>
        <taxon>Pseudomonadota</taxon>
        <taxon>Betaproteobacteria</taxon>
        <taxon>Neisseriales</taxon>
        <taxon>Neisseriaceae</taxon>
        <taxon>Neisseria</taxon>
    </lineage>
</organism>
<keyword id="KW-0489">Methyltransferase</keyword>
<keyword id="KW-1185">Reference proteome</keyword>
<keyword id="KW-0949">S-adenosyl-L-methionine</keyword>
<keyword id="KW-0808">Transferase</keyword>
<feature type="chain" id="PRO_0000414180" description="Ribosomal protein uL3 glutamine methyltransferase">
    <location>
        <begin position="1"/>
        <end position="299"/>
    </location>
</feature>
<protein>
    <recommendedName>
        <fullName evidence="1">Ribosomal protein uL3 glutamine methyltransferase</fullName>
        <shortName evidence="1">uL3 MTase</shortName>
        <ecNumber evidence="1">2.1.1.298</ecNumber>
    </recommendedName>
    <alternativeName>
        <fullName evidence="1">N5-glutamine methyltransferase PrmB</fullName>
    </alternativeName>
</protein>
<sequence>MFNQAAQELTTIRDVLRFAVSRFNEAGLFFGHGTDNAHDEAVYLILHTLNLPLDMLAPYLDAKLLEAEKEEVLAVIERRAVEHIPAAYLTHQAWQGEFDFYVDERVIVPRSFIYELLGDGLRPWIEYDELVHNALDLCTGSGCLAIQMAHHYPDAQIDAVDVSLDALEVAGINIEDYGLEERIQLIHTDLFEGLEGTYDLIVSNPPYVDAESVGALPEEYLHEPELALGSGADGLDATRQILLNAAKFLNPKGVLLVEIGHNRDVLEAAYPELPFTWLETSGGDGFVFLLTREQLLGEE</sequence>
<evidence type="ECO:0000255" key="1">
    <source>
        <dbReference type="HAMAP-Rule" id="MF_02125"/>
    </source>
</evidence>
<name>PRMB_NEIG1</name>